<dbReference type="EC" id="2.3.1.8"/>
<dbReference type="EMBL" id="AF041841">
    <property type="protein sequence ID" value="AAB96951.1"/>
    <property type="molecule type" value="Genomic_DNA"/>
</dbReference>
<dbReference type="EMBL" id="CP000568">
    <property type="protein sequence ID" value="ABN52261.1"/>
    <property type="status" value="ALT_INIT"/>
    <property type="molecule type" value="Genomic_DNA"/>
</dbReference>
<dbReference type="RefSeq" id="WP_041734229.1">
    <property type="nucleotide sequence ID" value="NC_009012.1"/>
</dbReference>
<dbReference type="SMR" id="O52593"/>
<dbReference type="STRING" id="203119.Cthe_1029"/>
<dbReference type="GeneID" id="35805900"/>
<dbReference type="KEGG" id="cth:Cthe_1029"/>
<dbReference type="eggNOG" id="COG0280">
    <property type="taxonomic scope" value="Bacteria"/>
</dbReference>
<dbReference type="HOGENOM" id="CLU_019723_0_1_9"/>
<dbReference type="OrthoDB" id="9805787at2"/>
<dbReference type="BRENDA" id="2.3.1.8">
    <property type="organism ID" value="1530"/>
</dbReference>
<dbReference type="UniPathway" id="UPA00340">
    <property type="reaction ID" value="UER00459"/>
</dbReference>
<dbReference type="Proteomes" id="UP000002145">
    <property type="component" value="Chromosome"/>
</dbReference>
<dbReference type="GO" id="GO:0005737">
    <property type="term" value="C:cytoplasm"/>
    <property type="evidence" value="ECO:0007669"/>
    <property type="project" value="UniProtKB-SubCell"/>
</dbReference>
<dbReference type="GO" id="GO:0008959">
    <property type="term" value="F:phosphate acetyltransferase activity"/>
    <property type="evidence" value="ECO:0007669"/>
    <property type="project" value="UniProtKB-EC"/>
</dbReference>
<dbReference type="GO" id="GO:0006085">
    <property type="term" value="P:acetyl-CoA biosynthetic process"/>
    <property type="evidence" value="ECO:0007669"/>
    <property type="project" value="UniProtKB-UniPathway"/>
</dbReference>
<dbReference type="Gene3D" id="3.40.50.10950">
    <property type="match status" value="1"/>
</dbReference>
<dbReference type="Gene3D" id="3.40.50.10750">
    <property type="entry name" value="Isocitrate/Isopropylmalate dehydrogenase-like"/>
    <property type="match status" value="1"/>
</dbReference>
<dbReference type="InterPro" id="IPR012147">
    <property type="entry name" value="P_Ac_Bu_trans"/>
</dbReference>
<dbReference type="InterPro" id="IPR004614">
    <property type="entry name" value="P_AcTrfase"/>
</dbReference>
<dbReference type="InterPro" id="IPR042113">
    <property type="entry name" value="P_AcTrfase_dom1"/>
</dbReference>
<dbReference type="InterPro" id="IPR042112">
    <property type="entry name" value="P_AcTrfase_dom2"/>
</dbReference>
<dbReference type="InterPro" id="IPR050500">
    <property type="entry name" value="Phos_Acetyltrans/Butyryltrans"/>
</dbReference>
<dbReference type="InterPro" id="IPR002505">
    <property type="entry name" value="PTA_PTB"/>
</dbReference>
<dbReference type="NCBIfam" id="NF004167">
    <property type="entry name" value="PRK05632.1"/>
    <property type="match status" value="1"/>
</dbReference>
<dbReference type="NCBIfam" id="NF007233">
    <property type="entry name" value="PRK09653.1"/>
    <property type="match status" value="1"/>
</dbReference>
<dbReference type="NCBIfam" id="TIGR00651">
    <property type="entry name" value="pta"/>
    <property type="match status" value="1"/>
</dbReference>
<dbReference type="PANTHER" id="PTHR43356">
    <property type="entry name" value="PHOSPHATE ACETYLTRANSFERASE"/>
    <property type="match status" value="1"/>
</dbReference>
<dbReference type="PANTHER" id="PTHR43356:SF3">
    <property type="entry name" value="PHOSPHATE ACETYLTRANSFERASE"/>
    <property type="match status" value="1"/>
</dbReference>
<dbReference type="Pfam" id="PF01515">
    <property type="entry name" value="PTA_PTB"/>
    <property type="match status" value="1"/>
</dbReference>
<dbReference type="PIRSF" id="PIRSF000428">
    <property type="entry name" value="P_Ac_trans"/>
    <property type="match status" value="1"/>
</dbReference>
<dbReference type="SUPFAM" id="SSF53659">
    <property type="entry name" value="Isocitrate/Isopropylmalate dehydrogenase-like"/>
    <property type="match status" value="1"/>
</dbReference>
<comment type="catalytic activity">
    <reaction>
        <text>acetyl-CoA + phosphate = acetyl phosphate + CoA</text>
        <dbReference type="Rhea" id="RHEA:19521"/>
        <dbReference type="ChEBI" id="CHEBI:22191"/>
        <dbReference type="ChEBI" id="CHEBI:43474"/>
        <dbReference type="ChEBI" id="CHEBI:57287"/>
        <dbReference type="ChEBI" id="CHEBI:57288"/>
        <dbReference type="EC" id="2.3.1.8"/>
    </reaction>
</comment>
<comment type="pathway">
    <text>Metabolic intermediate biosynthesis; acetyl-CoA biosynthesis; acetyl-CoA from acetate: step 2/2.</text>
</comment>
<comment type="subcellular location">
    <subcellularLocation>
        <location evidence="1">Cytoplasm</location>
    </subcellularLocation>
</comment>
<comment type="similarity">
    <text evidence="1">Belongs to the phosphate acetyltransferase and butyryltransferase family.</text>
</comment>
<comment type="sequence caution" evidence="1">
    <conflict type="erroneous initiation">
        <sequence resource="EMBL-CDS" id="ABN52261"/>
    </conflict>
</comment>
<reference key="1">
    <citation type="submission" date="1998-01" db="EMBL/GenBank/DDBJ databases">
        <authorList>
            <person name="Stevens D.R."/>
            <person name="Guerinot M.L."/>
            <person name="Lynd L.R."/>
        </authorList>
    </citation>
    <scope>NUCLEOTIDE SEQUENCE [GENOMIC DNA]</scope>
</reference>
<reference key="2">
    <citation type="submission" date="2007-02" db="EMBL/GenBank/DDBJ databases">
        <title>Complete sequence of Clostridium thermocellum ATCC 27405.</title>
        <authorList>
            <consortium name="US DOE Joint Genome Institute"/>
            <person name="Copeland A."/>
            <person name="Lucas S."/>
            <person name="Lapidus A."/>
            <person name="Barry K."/>
            <person name="Detter J.C."/>
            <person name="Glavina del Rio T."/>
            <person name="Hammon N."/>
            <person name="Israni S."/>
            <person name="Dalin E."/>
            <person name="Tice H."/>
            <person name="Pitluck S."/>
            <person name="Chertkov O."/>
            <person name="Brettin T."/>
            <person name="Bruce D."/>
            <person name="Han C."/>
            <person name="Tapia R."/>
            <person name="Gilna P."/>
            <person name="Schmutz J."/>
            <person name="Larimer F."/>
            <person name="Land M."/>
            <person name="Hauser L."/>
            <person name="Kyrpides N."/>
            <person name="Mikhailova N."/>
            <person name="Wu J.H.D."/>
            <person name="Newcomb M."/>
            <person name="Richardson P."/>
        </authorList>
    </citation>
    <scope>NUCLEOTIDE SEQUENCE [LARGE SCALE GENOMIC DNA]</scope>
    <source>
        <strain>ATCC 27405 / DSM 1237 / JCM 9322 / NBRC 103400 / NCIMB 10682 / NRRL B-4536 / VPI 7372</strain>
    </source>
</reference>
<sequence>MSFLEQIIERAKSDVKTIVLPESTDLRVIKAASMIMKKGIAKVVLIGNEKEIKSLAGDIDLEGVMIEDSLNSEKLEDYANTLYELRKSKGMTIEAARETIKDPLYYGVMMVKKGEADGMVAGAVNSTANTLRPALQILKTAPGTKLVSSFFVMVVPNCEYGHNGTFVYADCGLVENPDADQLSEIAISASKSFEMLVGAKPQVAMLSYSSYGSAKSELTEKVIKATQLAKEKAPHLAIDGELQVDAAIVPEVAKSKAKGSSVAGKANVLIFPDLDAGNIAYKLTQRLAKAEAYGPITQGLARPVNDLSRGCSAEDIVGVAAITAVQAQYVKA</sequence>
<keyword id="KW-0012">Acyltransferase</keyword>
<keyword id="KW-0963">Cytoplasm</keyword>
<keyword id="KW-1185">Reference proteome</keyword>
<keyword id="KW-0808">Transferase</keyword>
<gene>
    <name type="primary">pta</name>
    <name type="ordered locus">Cthe_1029</name>
</gene>
<feature type="chain" id="PRO_0000179126" description="Phosphate acetyltransferase">
    <location>
        <begin position="1"/>
        <end position="332"/>
    </location>
</feature>
<name>PTAS_ACET2</name>
<organism>
    <name type="scientific">Acetivibrio thermocellus (strain ATCC 27405 / DSM 1237 / JCM 9322 / NBRC 103400 / NCIMB 10682 / NRRL B-4536 / VPI 7372)</name>
    <name type="common">Clostridium thermocellum</name>
    <dbReference type="NCBI Taxonomy" id="203119"/>
    <lineage>
        <taxon>Bacteria</taxon>
        <taxon>Bacillati</taxon>
        <taxon>Bacillota</taxon>
        <taxon>Clostridia</taxon>
        <taxon>Eubacteriales</taxon>
        <taxon>Oscillospiraceae</taxon>
        <taxon>Acetivibrio</taxon>
    </lineage>
</organism>
<protein>
    <recommendedName>
        <fullName>Phosphate acetyltransferase</fullName>
        <ecNumber>2.3.1.8</ecNumber>
    </recommendedName>
    <alternativeName>
        <fullName>Phosphotransacetylase</fullName>
    </alternativeName>
</protein>
<evidence type="ECO:0000305" key="1"/>
<accession>O52593</accession>
<accession>A3DE82</accession>
<proteinExistence type="inferred from homology"/>